<accession>B3R001</accession>
<feature type="chain" id="PRO_1000166932" description="Large ribosomal subunit protein uL14">
    <location>
        <begin position="1"/>
        <end position="122"/>
    </location>
</feature>
<name>RL14_PHYMT</name>
<keyword id="KW-1185">Reference proteome</keyword>
<keyword id="KW-0687">Ribonucleoprotein</keyword>
<keyword id="KW-0689">Ribosomal protein</keyword>
<keyword id="KW-0694">RNA-binding</keyword>
<keyword id="KW-0699">rRNA-binding</keyword>
<proteinExistence type="inferred from homology"/>
<evidence type="ECO:0000255" key="1">
    <source>
        <dbReference type="HAMAP-Rule" id="MF_01367"/>
    </source>
</evidence>
<evidence type="ECO:0000305" key="2"/>
<sequence>MIQRESRLVVADNSGAKEVLVINILGGSTGFYANIGDIVIVTVKKAISSGAIKAGDVLKAVIVRTKYGLRRKDGSYIKFDENAVVIIKDDLTPRGTRIFGSIARELREKKFTKIISLAQEVL</sequence>
<gene>
    <name evidence="1" type="primary">rplN</name>
    <name type="ordered locus">ATP_00351</name>
</gene>
<protein>
    <recommendedName>
        <fullName evidence="1">Large ribosomal subunit protein uL14</fullName>
    </recommendedName>
    <alternativeName>
        <fullName evidence="2">50S ribosomal protein L14</fullName>
    </alternativeName>
</protein>
<comment type="function">
    <text evidence="1">Binds to 23S rRNA. Forms part of two intersubunit bridges in the 70S ribosome.</text>
</comment>
<comment type="subunit">
    <text evidence="1">Part of the 50S ribosomal subunit. Forms a cluster with proteins L3 and L19. In the 70S ribosome, L14 and L19 interact and together make contacts with the 16S rRNA in bridges B5 and B8.</text>
</comment>
<comment type="similarity">
    <text evidence="1">Belongs to the universal ribosomal protein uL14 family.</text>
</comment>
<reference key="1">
    <citation type="journal article" date="2008" name="BMC Genomics">
        <title>The linear chromosome of the plant-pathogenic mycoplasma 'Candidatus Phytoplasma mali'.</title>
        <authorList>
            <person name="Kube M."/>
            <person name="Schneider B."/>
            <person name="Kuhl H."/>
            <person name="Dandekar T."/>
            <person name="Heitmann K."/>
            <person name="Migdoll A.M."/>
            <person name="Reinhardt R."/>
            <person name="Seemueller E."/>
        </authorList>
    </citation>
    <scope>NUCLEOTIDE SEQUENCE [LARGE SCALE GENOMIC DNA]</scope>
    <source>
        <strain>AT</strain>
    </source>
</reference>
<organism>
    <name type="scientific">Phytoplasma mali (strain AT)</name>
    <dbReference type="NCBI Taxonomy" id="482235"/>
    <lineage>
        <taxon>Bacteria</taxon>
        <taxon>Bacillati</taxon>
        <taxon>Mycoplasmatota</taxon>
        <taxon>Mollicutes</taxon>
        <taxon>Acholeplasmatales</taxon>
        <taxon>Acholeplasmataceae</taxon>
        <taxon>Candidatus Phytoplasma</taxon>
        <taxon>16SrX (Apple proliferation group)</taxon>
    </lineage>
</organism>
<dbReference type="EMBL" id="CU469464">
    <property type="protein sequence ID" value="CAP18538.1"/>
    <property type="molecule type" value="Genomic_DNA"/>
</dbReference>
<dbReference type="SMR" id="B3R001"/>
<dbReference type="STRING" id="37692.ATP_00351"/>
<dbReference type="KEGG" id="pml:ATP_00351"/>
<dbReference type="eggNOG" id="COG0093">
    <property type="taxonomic scope" value="Bacteria"/>
</dbReference>
<dbReference type="HOGENOM" id="CLU_095071_2_1_14"/>
<dbReference type="Proteomes" id="UP000002020">
    <property type="component" value="Chromosome"/>
</dbReference>
<dbReference type="GO" id="GO:0022625">
    <property type="term" value="C:cytosolic large ribosomal subunit"/>
    <property type="evidence" value="ECO:0007669"/>
    <property type="project" value="TreeGrafter"/>
</dbReference>
<dbReference type="GO" id="GO:0070180">
    <property type="term" value="F:large ribosomal subunit rRNA binding"/>
    <property type="evidence" value="ECO:0007669"/>
    <property type="project" value="TreeGrafter"/>
</dbReference>
<dbReference type="GO" id="GO:0003735">
    <property type="term" value="F:structural constituent of ribosome"/>
    <property type="evidence" value="ECO:0007669"/>
    <property type="project" value="InterPro"/>
</dbReference>
<dbReference type="GO" id="GO:0006412">
    <property type="term" value="P:translation"/>
    <property type="evidence" value="ECO:0007669"/>
    <property type="project" value="UniProtKB-UniRule"/>
</dbReference>
<dbReference type="CDD" id="cd00337">
    <property type="entry name" value="Ribosomal_uL14"/>
    <property type="match status" value="1"/>
</dbReference>
<dbReference type="Gene3D" id="2.40.150.20">
    <property type="entry name" value="Ribosomal protein L14"/>
    <property type="match status" value="1"/>
</dbReference>
<dbReference type="HAMAP" id="MF_01367">
    <property type="entry name" value="Ribosomal_uL14"/>
    <property type="match status" value="1"/>
</dbReference>
<dbReference type="InterPro" id="IPR000218">
    <property type="entry name" value="Ribosomal_uL14"/>
</dbReference>
<dbReference type="InterPro" id="IPR005745">
    <property type="entry name" value="Ribosomal_uL14_bac-type"/>
</dbReference>
<dbReference type="InterPro" id="IPR019972">
    <property type="entry name" value="Ribosomal_uL14_CS"/>
</dbReference>
<dbReference type="InterPro" id="IPR036853">
    <property type="entry name" value="Ribosomal_uL14_sf"/>
</dbReference>
<dbReference type="NCBIfam" id="TIGR01067">
    <property type="entry name" value="rplN_bact"/>
    <property type="match status" value="1"/>
</dbReference>
<dbReference type="PANTHER" id="PTHR11761">
    <property type="entry name" value="50S/60S RIBOSOMAL PROTEIN L14/L23"/>
    <property type="match status" value="1"/>
</dbReference>
<dbReference type="PANTHER" id="PTHR11761:SF3">
    <property type="entry name" value="LARGE RIBOSOMAL SUBUNIT PROTEIN UL14M"/>
    <property type="match status" value="1"/>
</dbReference>
<dbReference type="Pfam" id="PF00238">
    <property type="entry name" value="Ribosomal_L14"/>
    <property type="match status" value="1"/>
</dbReference>
<dbReference type="SMART" id="SM01374">
    <property type="entry name" value="Ribosomal_L14"/>
    <property type="match status" value="1"/>
</dbReference>
<dbReference type="SUPFAM" id="SSF50193">
    <property type="entry name" value="Ribosomal protein L14"/>
    <property type="match status" value="1"/>
</dbReference>
<dbReference type="PROSITE" id="PS00049">
    <property type="entry name" value="RIBOSOMAL_L14"/>
    <property type="match status" value="1"/>
</dbReference>